<name>CYTA_MOUSE</name>
<reference key="1">
    <citation type="journal article" date="2005" name="Science">
        <title>The transcriptional landscape of the mammalian genome.</title>
        <authorList>
            <person name="Carninci P."/>
            <person name="Kasukawa T."/>
            <person name="Katayama S."/>
            <person name="Gough J."/>
            <person name="Frith M.C."/>
            <person name="Maeda N."/>
            <person name="Oyama R."/>
            <person name="Ravasi T."/>
            <person name="Lenhard B."/>
            <person name="Wells C."/>
            <person name="Kodzius R."/>
            <person name="Shimokawa K."/>
            <person name="Bajic V.B."/>
            <person name="Brenner S.E."/>
            <person name="Batalov S."/>
            <person name="Forrest A.R."/>
            <person name="Zavolan M."/>
            <person name="Davis M.J."/>
            <person name="Wilming L.G."/>
            <person name="Aidinis V."/>
            <person name="Allen J.E."/>
            <person name="Ambesi-Impiombato A."/>
            <person name="Apweiler R."/>
            <person name="Aturaliya R.N."/>
            <person name="Bailey T.L."/>
            <person name="Bansal M."/>
            <person name="Baxter L."/>
            <person name="Beisel K.W."/>
            <person name="Bersano T."/>
            <person name="Bono H."/>
            <person name="Chalk A.M."/>
            <person name="Chiu K.P."/>
            <person name="Choudhary V."/>
            <person name="Christoffels A."/>
            <person name="Clutterbuck D.R."/>
            <person name="Crowe M.L."/>
            <person name="Dalla E."/>
            <person name="Dalrymple B.P."/>
            <person name="de Bono B."/>
            <person name="Della Gatta G."/>
            <person name="di Bernardo D."/>
            <person name="Down T."/>
            <person name="Engstrom P."/>
            <person name="Fagiolini M."/>
            <person name="Faulkner G."/>
            <person name="Fletcher C.F."/>
            <person name="Fukushima T."/>
            <person name="Furuno M."/>
            <person name="Futaki S."/>
            <person name="Gariboldi M."/>
            <person name="Georgii-Hemming P."/>
            <person name="Gingeras T.R."/>
            <person name="Gojobori T."/>
            <person name="Green R.E."/>
            <person name="Gustincich S."/>
            <person name="Harbers M."/>
            <person name="Hayashi Y."/>
            <person name="Hensch T.K."/>
            <person name="Hirokawa N."/>
            <person name="Hill D."/>
            <person name="Huminiecki L."/>
            <person name="Iacono M."/>
            <person name="Ikeo K."/>
            <person name="Iwama A."/>
            <person name="Ishikawa T."/>
            <person name="Jakt M."/>
            <person name="Kanapin A."/>
            <person name="Katoh M."/>
            <person name="Kawasawa Y."/>
            <person name="Kelso J."/>
            <person name="Kitamura H."/>
            <person name="Kitano H."/>
            <person name="Kollias G."/>
            <person name="Krishnan S.P."/>
            <person name="Kruger A."/>
            <person name="Kummerfeld S.K."/>
            <person name="Kurochkin I.V."/>
            <person name="Lareau L.F."/>
            <person name="Lazarevic D."/>
            <person name="Lipovich L."/>
            <person name="Liu J."/>
            <person name="Liuni S."/>
            <person name="McWilliam S."/>
            <person name="Madan Babu M."/>
            <person name="Madera M."/>
            <person name="Marchionni L."/>
            <person name="Matsuda H."/>
            <person name="Matsuzawa S."/>
            <person name="Miki H."/>
            <person name="Mignone F."/>
            <person name="Miyake S."/>
            <person name="Morris K."/>
            <person name="Mottagui-Tabar S."/>
            <person name="Mulder N."/>
            <person name="Nakano N."/>
            <person name="Nakauchi H."/>
            <person name="Ng P."/>
            <person name="Nilsson R."/>
            <person name="Nishiguchi S."/>
            <person name="Nishikawa S."/>
            <person name="Nori F."/>
            <person name="Ohara O."/>
            <person name="Okazaki Y."/>
            <person name="Orlando V."/>
            <person name="Pang K.C."/>
            <person name="Pavan W.J."/>
            <person name="Pavesi G."/>
            <person name="Pesole G."/>
            <person name="Petrovsky N."/>
            <person name="Piazza S."/>
            <person name="Reed J."/>
            <person name="Reid J.F."/>
            <person name="Ring B.Z."/>
            <person name="Ringwald M."/>
            <person name="Rost B."/>
            <person name="Ruan Y."/>
            <person name="Salzberg S.L."/>
            <person name="Sandelin A."/>
            <person name="Schneider C."/>
            <person name="Schoenbach C."/>
            <person name="Sekiguchi K."/>
            <person name="Semple C.A."/>
            <person name="Seno S."/>
            <person name="Sessa L."/>
            <person name="Sheng Y."/>
            <person name="Shibata Y."/>
            <person name="Shimada H."/>
            <person name="Shimada K."/>
            <person name="Silva D."/>
            <person name="Sinclair B."/>
            <person name="Sperling S."/>
            <person name="Stupka E."/>
            <person name="Sugiura K."/>
            <person name="Sultana R."/>
            <person name="Takenaka Y."/>
            <person name="Taki K."/>
            <person name="Tammoja K."/>
            <person name="Tan S.L."/>
            <person name="Tang S."/>
            <person name="Taylor M.S."/>
            <person name="Tegner J."/>
            <person name="Teichmann S.A."/>
            <person name="Ueda H.R."/>
            <person name="van Nimwegen E."/>
            <person name="Verardo R."/>
            <person name="Wei C.L."/>
            <person name="Yagi K."/>
            <person name="Yamanishi H."/>
            <person name="Zabarovsky E."/>
            <person name="Zhu S."/>
            <person name="Zimmer A."/>
            <person name="Hide W."/>
            <person name="Bult C."/>
            <person name="Grimmond S.M."/>
            <person name="Teasdale R.D."/>
            <person name="Liu E.T."/>
            <person name="Brusic V."/>
            <person name="Quackenbush J."/>
            <person name="Wahlestedt C."/>
            <person name="Mattick J.S."/>
            <person name="Hume D.A."/>
            <person name="Kai C."/>
            <person name="Sasaki D."/>
            <person name="Tomaru Y."/>
            <person name="Fukuda S."/>
            <person name="Kanamori-Katayama M."/>
            <person name="Suzuki M."/>
            <person name="Aoki J."/>
            <person name="Arakawa T."/>
            <person name="Iida J."/>
            <person name="Imamura K."/>
            <person name="Itoh M."/>
            <person name="Kato T."/>
            <person name="Kawaji H."/>
            <person name="Kawagashira N."/>
            <person name="Kawashima T."/>
            <person name="Kojima M."/>
            <person name="Kondo S."/>
            <person name="Konno H."/>
            <person name="Nakano K."/>
            <person name="Ninomiya N."/>
            <person name="Nishio T."/>
            <person name="Okada M."/>
            <person name="Plessy C."/>
            <person name="Shibata K."/>
            <person name="Shiraki T."/>
            <person name="Suzuki S."/>
            <person name="Tagami M."/>
            <person name="Waki K."/>
            <person name="Watahiki A."/>
            <person name="Okamura-Oho Y."/>
            <person name="Suzuki H."/>
            <person name="Kawai J."/>
            <person name="Hayashizaki Y."/>
        </authorList>
    </citation>
    <scope>NUCLEOTIDE SEQUENCE [LARGE SCALE MRNA]</scope>
    <source>
        <strain>C57BL/6J</strain>
        <tissue>Vagina</tissue>
    </source>
</reference>
<sequence length="97" mass="10929">MIPGGLTEARPATAEVQEIADRVKAQLEEETNEKYEIFKAVEYKTQVVAGVNYFIKMDVGGGCFTHIKVFKDLSGKNNLELTGYQTNKTEDDELTYF</sequence>
<evidence type="ECO:0000250" key="1"/>
<evidence type="ECO:0000250" key="2">
    <source>
        <dbReference type="UniProtKB" id="P01039"/>
    </source>
</evidence>
<evidence type="ECO:0000305" key="3"/>
<comment type="function">
    <text evidence="1">This is an intracellular thiol proteinase inhibitor.</text>
</comment>
<comment type="subcellular location">
    <subcellularLocation>
        <location evidence="1">Cytoplasm</location>
    </subcellularLocation>
</comment>
<comment type="similarity">
    <text evidence="3">Belongs to the cystatin family.</text>
</comment>
<organism>
    <name type="scientific">Mus musculus</name>
    <name type="common">Mouse</name>
    <dbReference type="NCBI Taxonomy" id="10090"/>
    <lineage>
        <taxon>Eukaryota</taxon>
        <taxon>Metazoa</taxon>
        <taxon>Chordata</taxon>
        <taxon>Craniata</taxon>
        <taxon>Vertebrata</taxon>
        <taxon>Euteleostomi</taxon>
        <taxon>Mammalia</taxon>
        <taxon>Eutheria</taxon>
        <taxon>Euarchontoglires</taxon>
        <taxon>Glires</taxon>
        <taxon>Rodentia</taxon>
        <taxon>Myomorpha</taxon>
        <taxon>Muroidea</taxon>
        <taxon>Muridae</taxon>
        <taxon>Murinae</taxon>
        <taxon>Mus</taxon>
        <taxon>Mus</taxon>
    </lineage>
</organism>
<feature type="chain" id="PRO_0000207149" description="Cystatin-A">
    <location>
        <begin position="1"/>
        <end position="97"/>
    </location>
</feature>
<feature type="short sequence motif" description="Secondary area of contact" evidence="1">
    <location>
        <begin position="46"/>
        <end position="50"/>
    </location>
</feature>
<feature type="site" description="Reactive site" evidence="1">
    <location>
        <position position="4"/>
    </location>
</feature>
<feature type="modified residue" description="N-acetylmethionine" evidence="2">
    <location>
        <position position="1"/>
    </location>
</feature>
<dbReference type="EMBL" id="AK137702">
    <property type="protein sequence ID" value="BAE23468.1"/>
    <property type="molecule type" value="mRNA"/>
</dbReference>
<dbReference type="CCDS" id="CCDS37327.1"/>
<dbReference type="RefSeq" id="NP_001028411.1">
    <property type="nucleotide sequence ID" value="NM_001033239.3"/>
</dbReference>
<dbReference type="SMR" id="P56567"/>
<dbReference type="BioGRID" id="229065">
    <property type="interactions" value="2"/>
</dbReference>
<dbReference type="ComplexPortal" id="CPX-100">
    <property type="entry name" value="Cathepsin-B - cystatin-A complex"/>
</dbReference>
<dbReference type="FunCoup" id="P56567">
    <property type="interactions" value="195"/>
</dbReference>
<dbReference type="STRING" id="10090.ENSMUSP00000093795"/>
<dbReference type="MEROPS" id="I25.001"/>
<dbReference type="PhosphoSitePlus" id="P56567"/>
<dbReference type="PaxDb" id="10090-ENSMUSP00000093795"/>
<dbReference type="ProteomicsDB" id="279257"/>
<dbReference type="DNASU" id="209294"/>
<dbReference type="Ensembl" id="ENSMUST00000096090.3">
    <property type="protein sequence ID" value="ENSMUSP00000093795.3"/>
    <property type="gene ID" value="ENSMUSG00000034362.8"/>
</dbReference>
<dbReference type="GeneID" id="209294"/>
<dbReference type="KEGG" id="mmu:209294"/>
<dbReference type="UCSC" id="uc007zcf.1">
    <property type="organism name" value="mouse"/>
</dbReference>
<dbReference type="AGR" id="MGI:3524930"/>
<dbReference type="CTD" id="209294"/>
<dbReference type="MGI" id="MGI:3524930">
    <property type="gene designation" value="Csta1"/>
</dbReference>
<dbReference type="VEuPathDB" id="HostDB:ENSMUSG00000034362"/>
<dbReference type="eggNOG" id="ENOG502SF2X">
    <property type="taxonomic scope" value="Eukaryota"/>
</dbReference>
<dbReference type="GeneTree" id="ENSGT00940000155717"/>
<dbReference type="HOGENOM" id="CLU_150234_2_1_1"/>
<dbReference type="InParanoid" id="P56567"/>
<dbReference type="OMA" id="INYFIKM"/>
<dbReference type="OrthoDB" id="2429551at2759"/>
<dbReference type="PhylomeDB" id="P56567"/>
<dbReference type="TreeFam" id="TF333174"/>
<dbReference type="BioGRID-ORCS" id="209294">
    <property type="hits" value="0 hits in 76 CRISPR screens"/>
</dbReference>
<dbReference type="ChiTaRS" id="Csta1">
    <property type="organism name" value="mouse"/>
</dbReference>
<dbReference type="PRO" id="PR:P56567"/>
<dbReference type="Proteomes" id="UP000000589">
    <property type="component" value="Chromosome 16"/>
</dbReference>
<dbReference type="RNAct" id="P56567">
    <property type="molecule type" value="protein"/>
</dbReference>
<dbReference type="Bgee" id="ENSMUSG00000034362">
    <property type="expression patterns" value="Expressed in tail skin and 41 other cell types or tissues"/>
</dbReference>
<dbReference type="ExpressionAtlas" id="P56567">
    <property type="expression patterns" value="baseline and differential"/>
</dbReference>
<dbReference type="GO" id="GO:0005737">
    <property type="term" value="C:cytoplasm"/>
    <property type="evidence" value="ECO:0007669"/>
    <property type="project" value="UniProtKB-SubCell"/>
</dbReference>
<dbReference type="GO" id="GO:1904090">
    <property type="term" value="C:peptidase inhibitor complex"/>
    <property type="evidence" value="ECO:0000266"/>
    <property type="project" value="ComplexPortal"/>
</dbReference>
<dbReference type="GO" id="GO:0004869">
    <property type="term" value="F:cysteine-type endopeptidase inhibitor activity"/>
    <property type="evidence" value="ECO:0007669"/>
    <property type="project" value="UniProtKB-KW"/>
</dbReference>
<dbReference type="CDD" id="cd00042">
    <property type="entry name" value="CY"/>
    <property type="match status" value="1"/>
</dbReference>
<dbReference type="FunFam" id="3.10.450.10:FF:000001">
    <property type="entry name" value="Cystatin-A"/>
    <property type="match status" value="1"/>
</dbReference>
<dbReference type="Gene3D" id="3.10.450.10">
    <property type="match status" value="1"/>
</dbReference>
<dbReference type="InterPro" id="IPR000010">
    <property type="entry name" value="Cystatin_dom"/>
</dbReference>
<dbReference type="InterPro" id="IPR046350">
    <property type="entry name" value="Cystatin_sf"/>
</dbReference>
<dbReference type="InterPro" id="IPR018073">
    <property type="entry name" value="Prot_inh_cystat_CS"/>
</dbReference>
<dbReference type="InterPro" id="IPR001713">
    <property type="entry name" value="Prot_inh_stefin"/>
</dbReference>
<dbReference type="PANTHER" id="PTHR11414:SF25">
    <property type="entry name" value="2010005H15RIK PROTEIN-RELATED"/>
    <property type="match status" value="1"/>
</dbReference>
<dbReference type="PANTHER" id="PTHR11414">
    <property type="entry name" value="CYSTATIN FAMILY MEMBER"/>
    <property type="match status" value="1"/>
</dbReference>
<dbReference type="Pfam" id="PF00031">
    <property type="entry name" value="Cystatin"/>
    <property type="match status" value="1"/>
</dbReference>
<dbReference type="PRINTS" id="PR00295">
    <property type="entry name" value="STEFINA"/>
</dbReference>
<dbReference type="SMART" id="SM00043">
    <property type="entry name" value="CY"/>
    <property type="match status" value="1"/>
</dbReference>
<dbReference type="SUPFAM" id="SSF54403">
    <property type="entry name" value="Cystatin/monellin"/>
    <property type="match status" value="1"/>
</dbReference>
<dbReference type="PROSITE" id="PS00287">
    <property type="entry name" value="CYSTATIN"/>
    <property type="match status" value="1"/>
</dbReference>
<proteinExistence type="inferred from homology"/>
<gene>
    <name type="primary">Csta</name>
    <name type="synonym">Csta1</name>
</gene>
<keyword id="KW-0007">Acetylation</keyword>
<keyword id="KW-0963">Cytoplasm</keyword>
<keyword id="KW-0646">Protease inhibitor</keyword>
<keyword id="KW-1185">Reference proteome</keyword>
<keyword id="KW-0789">Thiol protease inhibitor</keyword>
<protein>
    <recommendedName>
        <fullName>Cystatin-A</fullName>
    </recommendedName>
    <alternativeName>
        <fullName>Cystatin-A1</fullName>
    </alternativeName>
    <alternativeName>
        <fullName>Stefin-A</fullName>
    </alternativeName>
</protein>
<accession>P56567</accession>
<accession>Q3UV05</accession>